<sequence>MTMTPREIVAELDKFIIGQNDAKRAVAIALRNRWRRMQLGEELRREIFPKNILMIGPTGVGKTEIARRLSDLAGAPFLKIEATKFTEVGYVGRDVESIIRDLVDVAVKMTREKAIRQVKSLAEEAAEERVLDALIPPARGGFQGEPTAEEKPTEKKESATRQLFRKKLRNGGLDDKEIEVEVSAHPSFEIMGPPGMEEMVSQLQGIMSSMSSRRSKSRRLKVKDALRILGEEEAAKLVDEDQIKSTALASVEQNGIVFIDEIDKIVKRDGAVGADVSREGVQRDLLPLVEGSTVFTKYGMVKTDHILFIASGAFHIAKPSDLVPELQGRFPIRVELKALTADDFVRILTEPKASLTEQYTELLKTENFGLSFTKDGIKRLAEIAYQVNDRSENIGARRLHTIMERLLEEVSFEATDKQGESITIDADYVNKQLKKLAEDEDLSRYIL</sequence>
<keyword id="KW-0067">ATP-binding</keyword>
<keyword id="KW-0143">Chaperone</keyword>
<keyword id="KW-0963">Cytoplasm</keyword>
<keyword id="KW-0547">Nucleotide-binding</keyword>
<keyword id="KW-0346">Stress response</keyword>
<name>HSLU_COXBN</name>
<dbReference type="EMBL" id="CP000733">
    <property type="protein sequence ID" value="ABS78184.2"/>
    <property type="status" value="ALT_INIT"/>
    <property type="molecule type" value="Genomic_DNA"/>
</dbReference>
<dbReference type="RefSeq" id="WP_043881075.1">
    <property type="nucleotide sequence ID" value="NC_009727.1"/>
</dbReference>
<dbReference type="SMR" id="A9KH31"/>
<dbReference type="KEGG" id="cbd:CBUD_2114"/>
<dbReference type="HOGENOM" id="CLU_033123_0_0_6"/>
<dbReference type="Proteomes" id="UP000008555">
    <property type="component" value="Chromosome"/>
</dbReference>
<dbReference type="GO" id="GO:0009376">
    <property type="term" value="C:HslUV protease complex"/>
    <property type="evidence" value="ECO:0007669"/>
    <property type="project" value="UniProtKB-UniRule"/>
</dbReference>
<dbReference type="GO" id="GO:0005524">
    <property type="term" value="F:ATP binding"/>
    <property type="evidence" value="ECO:0007669"/>
    <property type="project" value="UniProtKB-UniRule"/>
</dbReference>
<dbReference type="GO" id="GO:0016887">
    <property type="term" value="F:ATP hydrolysis activity"/>
    <property type="evidence" value="ECO:0007669"/>
    <property type="project" value="InterPro"/>
</dbReference>
<dbReference type="GO" id="GO:0008233">
    <property type="term" value="F:peptidase activity"/>
    <property type="evidence" value="ECO:0007669"/>
    <property type="project" value="InterPro"/>
</dbReference>
<dbReference type="GO" id="GO:0036402">
    <property type="term" value="F:proteasome-activating activity"/>
    <property type="evidence" value="ECO:0007669"/>
    <property type="project" value="UniProtKB-UniRule"/>
</dbReference>
<dbReference type="GO" id="GO:0043335">
    <property type="term" value="P:protein unfolding"/>
    <property type="evidence" value="ECO:0007669"/>
    <property type="project" value="UniProtKB-UniRule"/>
</dbReference>
<dbReference type="GO" id="GO:0051603">
    <property type="term" value="P:proteolysis involved in protein catabolic process"/>
    <property type="evidence" value="ECO:0007669"/>
    <property type="project" value="TreeGrafter"/>
</dbReference>
<dbReference type="CDD" id="cd19498">
    <property type="entry name" value="RecA-like_HslU"/>
    <property type="match status" value="1"/>
</dbReference>
<dbReference type="FunFam" id="1.10.8.10:FF:000028">
    <property type="entry name" value="ATP-dependent protease ATPase subunit HslU"/>
    <property type="match status" value="1"/>
</dbReference>
<dbReference type="FunFam" id="3.40.50.300:FF:000213">
    <property type="entry name" value="ATP-dependent protease ATPase subunit HslU"/>
    <property type="match status" value="1"/>
</dbReference>
<dbReference type="FunFam" id="3.40.50.300:FF:000220">
    <property type="entry name" value="ATP-dependent protease ATPase subunit HslU"/>
    <property type="match status" value="1"/>
</dbReference>
<dbReference type="Gene3D" id="1.10.8.60">
    <property type="match status" value="1"/>
</dbReference>
<dbReference type="Gene3D" id="1.10.8.10">
    <property type="entry name" value="DNA helicase RuvA subunit, C-terminal domain"/>
    <property type="match status" value="2"/>
</dbReference>
<dbReference type="Gene3D" id="3.40.50.300">
    <property type="entry name" value="P-loop containing nucleotide triphosphate hydrolases"/>
    <property type="match status" value="2"/>
</dbReference>
<dbReference type="HAMAP" id="MF_00249">
    <property type="entry name" value="HslU"/>
    <property type="match status" value="1"/>
</dbReference>
<dbReference type="InterPro" id="IPR003593">
    <property type="entry name" value="AAA+_ATPase"/>
</dbReference>
<dbReference type="InterPro" id="IPR050052">
    <property type="entry name" value="ATP-dep_Clp_protease_ClpX"/>
</dbReference>
<dbReference type="InterPro" id="IPR003959">
    <property type="entry name" value="ATPase_AAA_core"/>
</dbReference>
<dbReference type="InterPro" id="IPR019489">
    <property type="entry name" value="Clp_ATPase_C"/>
</dbReference>
<dbReference type="InterPro" id="IPR004491">
    <property type="entry name" value="HslU"/>
</dbReference>
<dbReference type="InterPro" id="IPR027417">
    <property type="entry name" value="P-loop_NTPase"/>
</dbReference>
<dbReference type="NCBIfam" id="TIGR00390">
    <property type="entry name" value="hslU"/>
    <property type="match status" value="1"/>
</dbReference>
<dbReference type="NCBIfam" id="NF003544">
    <property type="entry name" value="PRK05201.1"/>
    <property type="match status" value="1"/>
</dbReference>
<dbReference type="PANTHER" id="PTHR48102">
    <property type="entry name" value="ATP-DEPENDENT CLP PROTEASE ATP-BINDING SUBUNIT CLPX-LIKE, MITOCHONDRIAL-RELATED"/>
    <property type="match status" value="1"/>
</dbReference>
<dbReference type="PANTHER" id="PTHR48102:SF3">
    <property type="entry name" value="ATP-DEPENDENT PROTEASE ATPASE SUBUNIT HSLU"/>
    <property type="match status" value="1"/>
</dbReference>
<dbReference type="Pfam" id="PF00004">
    <property type="entry name" value="AAA"/>
    <property type="match status" value="1"/>
</dbReference>
<dbReference type="Pfam" id="PF07724">
    <property type="entry name" value="AAA_2"/>
    <property type="match status" value="1"/>
</dbReference>
<dbReference type="SMART" id="SM00382">
    <property type="entry name" value="AAA"/>
    <property type="match status" value="1"/>
</dbReference>
<dbReference type="SMART" id="SM01086">
    <property type="entry name" value="ClpB_D2-small"/>
    <property type="match status" value="1"/>
</dbReference>
<dbReference type="SUPFAM" id="SSF52540">
    <property type="entry name" value="P-loop containing nucleoside triphosphate hydrolases"/>
    <property type="match status" value="1"/>
</dbReference>
<comment type="function">
    <text evidence="1">ATPase subunit of a proteasome-like degradation complex; this subunit has chaperone activity. The binding of ATP and its subsequent hydrolysis by HslU are essential for unfolding of protein substrates subsequently hydrolyzed by HslV. HslU recognizes the N-terminal part of its protein substrates and unfolds these before they are guided to HslV for hydrolysis.</text>
</comment>
<comment type="subunit">
    <text evidence="1">A double ring-shaped homohexamer of HslV is capped on each side by a ring-shaped HslU homohexamer. The assembly of the HslU/HslV complex is dependent on binding of ATP.</text>
</comment>
<comment type="subcellular location">
    <subcellularLocation>
        <location evidence="1">Cytoplasm</location>
    </subcellularLocation>
</comment>
<comment type="similarity">
    <text evidence="1">Belongs to the ClpX chaperone family. HslU subfamily.</text>
</comment>
<comment type="sequence caution" evidence="3">
    <conflict type="erroneous initiation">
        <sequence resource="EMBL-CDS" id="ABS78184"/>
    </conflict>
</comment>
<gene>
    <name evidence="1" type="primary">hslU</name>
    <name type="ordered locus">CBUD_2114</name>
</gene>
<protein>
    <recommendedName>
        <fullName evidence="1">ATP-dependent protease ATPase subunit HslU</fullName>
    </recommendedName>
    <alternativeName>
        <fullName evidence="1">Unfoldase HslU</fullName>
    </alternativeName>
</protein>
<accession>A9KH31</accession>
<reference key="1">
    <citation type="journal article" date="2009" name="Infect. Immun.">
        <title>Comparative genomics reveal extensive transposon-mediated genomic plasticity and diversity among potential effector proteins within the genus Coxiella.</title>
        <authorList>
            <person name="Beare P.A."/>
            <person name="Unsworth N."/>
            <person name="Andoh M."/>
            <person name="Voth D.E."/>
            <person name="Omsland A."/>
            <person name="Gilk S.D."/>
            <person name="Williams K.P."/>
            <person name="Sobral B.W."/>
            <person name="Kupko J.J. III"/>
            <person name="Porcella S.F."/>
            <person name="Samuel J.E."/>
            <person name="Heinzen R.A."/>
        </authorList>
    </citation>
    <scope>NUCLEOTIDE SEQUENCE [LARGE SCALE GENOMIC DNA]</scope>
    <source>
        <strain>Dugway 5J108-111</strain>
    </source>
</reference>
<feature type="chain" id="PRO_1000078442" description="ATP-dependent protease ATPase subunit HslU">
    <location>
        <begin position="1"/>
        <end position="447"/>
    </location>
</feature>
<feature type="region of interest" description="Disordered" evidence="2">
    <location>
        <begin position="136"/>
        <end position="160"/>
    </location>
</feature>
<feature type="compositionally biased region" description="Basic and acidic residues" evidence="2">
    <location>
        <begin position="148"/>
        <end position="159"/>
    </location>
</feature>
<feature type="binding site" evidence="1">
    <location>
        <position position="17"/>
    </location>
    <ligand>
        <name>ATP</name>
        <dbReference type="ChEBI" id="CHEBI:30616"/>
    </ligand>
</feature>
<feature type="binding site" evidence="1">
    <location>
        <begin position="59"/>
        <end position="64"/>
    </location>
    <ligand>
        <name>ATP</name>
        <dbReference type="ChEBI" id="CHEBI:30616"/>
    </ligand>
</feature>
<feature type="binding site" evidence="1">
    <location>
        <position position="260"/>
    </location>
    <ligand>
        <name>ATP</name>
        <dbReference type="ChEBI" id="CHEBI:30616"/>
    </ligand>
</feature>
<feature type="binding site" evidence="1">
    <location>
        <position position="325"/>
    </location>
    <ligand>
        <name>ATP</name>
        <dbReference type="ChEBI" id="CHEBI:30616"/>
    </ligand>
</feature>
<feature type="binding site" evidence="1">
    <location>
        <position position="397"/>
    </location>
    <ligand>
        <name>ATP</name>
        <dbReference type="ChEBI" id="CHEBI:30616"/>
    </ligand>
</feature>
<evidence type="ECO:0000255" key="1">
    <source>
        <dbReference type="HAMAP-Rule" id="MF_00249"/>
    </source>
</evidence>
<evidence type="ECO:0000256" key="2">
    <source>
        <dbReference type="SAM" id="MobiDB-lite"/>
    </source>
</evidence>
<evidence type="ECO:0000305" key="3"/>
<proteinExistence type="inferred from homology"/>
<organism>
    <name type="scientific">Coxiella burnetii (strain Dugway 5J108-111)</name>
    <dbReference type="NCBI Taxonomy" id="434922"/>
    <lineage>
        <taxon>Bacteria</taxon>
        <taxon>Pseudomonadati</taxon>
        <taxon>Pseudomonadota</taxon>
        <taxon>Gammaproteobacteria</taxon>
        <taxon>Legionellales</taxon>
        <taxon>Coxiellaceae</taxon>
        <taxon>Coxiella</taxon>
    </lineage>
</organism>